<keyword id="KW-0064">Aspartyl protease</keyword>
<keyword id="KW-0997">Cell inner membrane</keyword>
<keyword id="KW-1003">Cell membrane</keyword>
<keyword id="KW-0378">Hydrolase</keyword>
<keyword id="KW-0472">Membrane</keyword>
<keyword id="KW-0645">Protease</keyword>
<keyword id="KW-1185">Reference proteome</keyword>
<keyword id="KW-0812">Transmembrane</keyword>
<keyword id="KW-1133">Transmembrane helix</keyword>
<comment type="function">
    <text evidence="1">This protein specifically catalyzes the removal of signal peptides from prolipoproteins.</text>
</comment>
<comment type="catalytic activity">
    <reaction evidence="1">
        <text>Release of signal peptides from bacterial membrane prolipoproteins. Hydrolyzes -Xaa-Yaa-Zaa-|-(S,diacylglyceryl)Cys-, in which Xaa is hydrophobic (preferably Leu), and Yaa (Ala or Ser) and Zaa (Gly or Ala) have small, neutral side chains.</text>
        <dbReference type="EC" id="3.4.23.36"/>
    </reaction>
</comment>
<comment type="pathway">
    <text evidence="1">Protein modification; lipoprotein biosynthesis (signal peptide cleavage).</text>
</comment>
<comment type="subcellular location">
    <subcellularLocation>
        <location evidence="1">Cell inner membrane</location>
        <topology evidence="1">Multi-pass membrane protein</topology>
    </subcellularLocation>
</comment>
<comment type="similarity">
    <text evidence="1">Belongs to the peptidase A8 family.</text>
</comment>
<feature type="chain" id="PRO_1000038814" description="Lipoprotein signal peptidase">
    <location>
        <begin position="1"/>
        <end position="166"/>
    </location>
</feature>
<feature type="transmembrane region" description="Helical" evidence="1">
    <location>
        <begin position="11"/>
        <end position="31"/>
    </location>
</feature>
<feature type="transmembrane region" description="Helical" evidence="1">
    <location>
        <begin position="42"/>
        <end position="62"/>
    </location>
</feature>
<feature type="transmembrane region" description="Helical" evidence="1">
    <location>
        <begin position="67"/>
        <end position="87"/>
    </location>
</feature>
<feature type="transmembrane region" description="Helical" evidence="1">
    <location>
        <begin position="90"/>
        <end position="110"/>
    </location>
</feature>
<feature type="transmembrane region" description="Helical" evidence="1">
    <location>
        <begin position="133"/>
        <end position="153"/>
    </location>
</feature>
<feature type="active site" evidence="1">
    <location>
        <position position="123"/>
    </location>
</feature>
<feature type="active site" evidence="1">
    <location>
        <position position="141"/>
    </location>
</feature>
<sequence length="166" mass="18348">MSKLAQKSGLVWLWLSLLLLVVDFASKTLVVSSMAYQESINLLPVFSITYVHNYGAAYSFLSDAGGWQRWFLSAIAIAISGLLVWWLKRLPATNKVLCAAYSLVLAGAIGNLYDRIAYGYVIDFIHVFYKNSHFPVFNVADCAICIGAALLLFDAFTGESPKEHKA</sequence>
<dbReference type="EC" id="3.4.23.36" evidence="1"/>
<dbReference type="EMBL" id="CR954246">
    <property type="protein sequence ID" value="CAI85998.1"/>
    <property type="molecule type" value="Genomic_DNA"/>
</dbReference>
<dbReference type="SMR" id="Q3IEA1"/>
<dbReference type="STRING" id="326442.PSHAa0919"/>
<dbReference type="KEGG" id="pha:PSHAa0919"/>
<dbReference type="PATRIC" id="fig|326442.8.peg.880"/>
<dbReference type="eggNOG" id="COG0597">
    <property type="taxonomic scope" value="Bacteria"/>
</dbReference>
<dbReference type="HOGENOM" id="CLU_083252_4_0_6"/>
<dbReference type="BioCyc" id="PHAL326442:PSHA_RS04485-MONOMER"/>
<dbReference type="UniPathway" id="UPA00665"/>
<dbReference type="Proteomes" id="UP000006843">
    <property type="component" value="Chromosome I"/>
</dbReference>
<dbReference type="GO" id="GO:0005886">
    <property type="term" value="C:plasma membrane"/>
    <property type="evidence" value="ECO:0007669"/>
    <property type="project" value="UniProtKB-SubCell"/>
</dbReference>
<dbReference type="GO" id="GO:0004190">
    <property type="term" value="F:aspartic-type endopeptidase activity"/>
    <property type="evidence" value="ECO:0007669"/>
    <property type="project" value="UniProtKB-UniRule"/>
</dbReference>
<dbReference type="GO" id="GO:0006508">
    <property type="term" value="P:proteolysis"/>
    <property type="evidence" value="ECO:0007669"/>
    <property type="project" value="UniProtKB-KW"/>
</dbReference>
<dbReference type="HAMAP" id="MF_00161">
    <property type="entry name" value="LspA"/>
    <property type="match status" value="1"/>
</dbReference>
<dbReference type="InterPro" id="IPR001872">
    <property type="entry name" value="Peptidase_A8"/>
</dbReference>
<dbReference type="NCBIfam" id="TIGR00077">
    <property type="entry name" value="lspA"/>
    <property type="match status" value="1"/>
</dbReference>
<dbReference type="PANTHER" id="PTHR33695">
    <property type="entry name" value="LIPOPROTEIN SIGNAL PEPTIDASE"/>
    <property type="match status" value="1"/>
</dbReference>
<dbReference type="PANTHER" id="PTHR33695:SF1">
    <property type="entry name" value="LIPOPROTEIN SIGNAL PEPTIDASE"/>
    <property type="match status" value="1"/>
</dbReference>
<dbReference type="Pfam" id="PF01252">
    <property type="entry name" value="Peptidase_A8"/>
    <property type="match status" value="1"/>
</dbReference>
<dbReference type="PRINTS" id="PR00781">
    <property type="entry name" value="LIPOSIGPTASE"/>
</dbReference>
<dbReference type="PROSITE" id="PS00855">
    <property type="entry name" value="SPASE_II"/>
    <property type="match status" value="1"/>
</dbReference>
<reference key="1">
    <citation type="journal article" date="2005" name="Genome Res.">
        <title>Coping with cold: the genome of the versatile marine Antarctica bacterium Pseudoalteromonas haloplanktis TAC125.</title>
        <authorList>
            <person name="Medigue C."/>
            <person name="Krin E."/>
            <person name="Pascal G."/>
            <person name="Barbe V."/>
            <person name="Bernsel A."/>
            <person name="Bertin P.N."/>
            <person name="Cheung F."/>
            <person name="Cruveiller S."/>
            <person name="D'Amico S."/>
            <person name="Duilio A."/>
            <person name="Fang G."/>
            <person name="Feller G."/>
            <person name="Ho C."/>
            <person name="Mangenot S."/>
            <person name="Marino G."/>
            <person name="Nilsson J."/>
            <person name="Parrilli E."/>
            <person name="Rocha E.P.C."/>
            <person name="Rouy Z."/>
            <person name="Sekowska A."/>
            <person name="Tutino M.L."/>
            <person name="Vallenet D."/>
            <person name="von Heijne G."/>
            <person name="Danchin A."/>
        </authorList>
    </citation>
    <scope>NUCLEOTIDE SEQUENCE [LARGE SCALE GENOMIC DNA]</scope>
    <source>
        <strain>TAC 125</strain>
    </source>
</reference>
<gene>
    <name evidence="1" type="primary">lspA</name>
    <name type="ordered locus">PSHAa0919</name>
</gene>
<proteinExistence type="inferred from homology"/>
<accession>Q3IEA1</accession>
<protein>
    <recommendedName>
        <fullName evidence="1">Lipoprotein signal peptidase</fullName>
        <ecNumber evidence="1">3.4.23.36</ecNumber>
    </recommendedName>
    <alternativeName>
        <fullName evidence="1">Prolipoprotein signal peptidase</fullName>
    </alternativeName>
    <alternativeName>
        <fullName evidence="1">Signal peptidase II</fullName>
        <shortName evidence="1">SPase II</shortName>
    </alternativeName>
</protein>
<organism>
    <name type="scientific">Pseudoalteromonas translucida (strain TAC 125)</name>
    <dbReference type="NCBI Taxonomy" id="326442"/>
    <lineage>
        <taxon>Bacteria</taxon>
        <taxon>Pseudomonadati</taxon>
        <taxon>Pseudomonadota</taxon>
        <taxon>Gammaproteobacteria</taxon>
        <taxon>Alteromonadales</taxon>
        <taxon>Pseudoalteromonadaceae</taxon>
        <taxon>Pseudoalteromonas</taxon>
    </lineage>
</organism>
<evidence type="ECO:0000255" key="1">
    <source>
        <dbReference type="HAMAP-Rule" id="MF_00161"/>
    </source>
</evidence>
<name>LSPA_PSET1</name>